<proteinExistence type="inferred from homology"/>
<name>TRMD_BORGP</name>
<gene>
    <name evidence="1" type="primary">trmD</name>
    <name type="ordered locus">BG0721</name>
</gene>
<sequence length="239" mass="27328">MKFTVISLFPAIIKPFFENSIMKKAINKGIVSFELIDVRDFSKDKHKRCDDLSYGGGAGMVLKAEPMSFALEHVEATKKTTIFLSPSGIKYTQELAYSLSKKEEIVIICGRYEGIDQRIIDLYVDFEISIGDYVLSSGEIAALVLIDSVYRLLDGVINPNSLLEESFGMKNGLLEYPHYTRPYNFMGIKVPEVLVSGHHENIKNWRLFKAREKTKKNRYDLYLKYLEIIGEDNGFDKKN</sequence>
<organism>
    <name type="scientific">Borrelia garinii subsp. bavariensis (strain ATCC BAA-2496 / DSM 23469 / PBi)</name>
    <name type="common">Borreliella bavariensis</name>
    <dbReference type="NCBI Taxonomy" id="290434"/>
    <lineage>
        <taxon>Bacteria</taxon>
        <taxon>Pseudomonadati</taxon>
        <taxon>Spirochaetota</taxon>
        <taxon>Spirochaetia</taxon>
        <taxon>Spirochaetales</taxon>
        <taxon>Borreliaceae</taxon>
        <taxon>Borreliella</taxon>
    </lineage>
</organism>
<protein>
    <recommendedName>
        <fullName evidence="1">tRNA (guanine-N(1)-)-methyltransferase</fullName>
        <ecNumber evidence="1">2.1.1.228</ecNumber>
    </recommendedName>
    <alternativeName>
        <fullName evidence="1">M1G-methyltransferase</fullName>
    </alternativeName>
    <alternativeName>
        <fullName evidence="1">tRNA [GM37] methyltransferase</fullName>
    </alternativeName>
</protein>
<evidence type="ECO:0000255" key="1">
    <source>
        <dbReference type="HAMAP-Rule" id="MF_00605"/>
    </source>
</evidence>
<accession>Q660H3</accession>
<feature type="chain" id="PRO_0000060340" description="tRNA (guanine-N(1)-)-methyltransferase">
    <location>
        <begin position="1"/>
        <end position="239"/>
    </location>
</feature>
<feature type="binding site" evidence="1">
    <location>
        <position position="110"/>
    </location>
    <ligand>
        <name>S-adenosyl-L-methionine</name>
        <dbReference type="ChEBI" id="CHEBI:59789"/>
    </ligand>
</feature>
<feature type="binding site" evidence="1">
    <location>
        <begin position="130"/>
        <end position="135"/>
    </location>
    <ligand>
        <name>S-adenosyl-L-methionine</name>
        <dbReference type="ChEBI" id="CHEBI:59789"/>
    </ligand>
</feature>
<dbReference type="EC" id="2.1.1.228" evidence="1"/>
<dbReference type="EMBL" id="CP000013">
    <property type="protein sequence ID" value="AAU07548.1"/>
    <property type="molecule type" value="Genomic_DNA"/>
</dbReference>
<dbReference type="RefSeq" id="WP_011194000.1">
    <property type="nucleotide sequence ID" value="NZ_CP028872.1"/>
</dbReference>
<dbReference type="SMR" id="Q660H3"/>
<dbReference type="GeneID" id="45161496"/>
<dbReference type="KEGG" id="bga:BG0721"/>
<dbReference type="eggNOG" id="COG0336">
    <property type="taxonomic scope" value="Bacteria"/>
</dbReference>
<dbReference type="HOGENOM" id="CLU_047363_0_1_12"/>
<dbReference type="OrthoDB" id="9807416at2"/>
<dbReference type="Proteomes" id="UP000002276">
    <property type="component" value="Chromosome"/>
</dbReference>
<dbReference type="GO" id="GO:0005829">
    <property type="term" value="C:cytosol"/>
    <property type="evidence" value="ECO:0007669"/>
    <property type="project" value="TreeGrafter"/>
</dbReference>
<dbReference type="GO" id="GO:0052906">
    <property type="term" value="F:tRNA (guanine(37)-N1)-methyltransferase activity"/>
    <property type="evidence" value="ECO:0007669"/>
    <property type="project" value="UniProtKB-UniRule"/>
</dbReference>
<dbReference type="GO" id="GO:0002939">
    <property type="term" value="P:tRNA N1-guanine methylation"/>
    <property type="evidence" value="ECO:0007669"/>
    <property type="project" value="TreeGrafter"/>
</dbReference>
<dbReference type="CDD" id="cd18080">
    <property type="entry name" value="TrmD-like"/>
    <property type="match status" value="1"/>
</dbReference>
<dbReference type="FunFam" id="3.40.1280.10:FF:000001">
    <property type="entry name" value="tRNA (guanine-N(1)-)-methyltransferase"/>
    <property type="match status" value="1"/>
</dbReference>
<dbReference type="Gene3D" id="3.40.1280.10">
    <property type="match status" value="1"/>
</dbReference>
<dbReference type="Gene3D" id="1.10.1270.20">
    <property type="entry name" value="tRNA(m1g37)methyltransferase, domain 2"/>
    <property type="match status" value="1"/>
</dbReference>
<dbReference type="HAMAP" id="MF_00605">
    <property type="entry name" value="TrmD"/>
    <property type="match status" value="1"/>
</dbReference>
<dbReference type="InterPro" id="IPR029028">
    <property type="entry name" value="Alpha/beta_knot_MTases"/>
</dbReference>
<dbReference type="InterPro" id="IPR023148">
    <property type="entry name" value="tRNA_m1G_MeTrfase_C_sf"/>
</dbReference>
<dbReference type="InterPro" id="IPR002649">
    <property type="entry name" value="tRNA_m1G_MeTrfase_TrmD"/>
</dbReference>
<dbReference type="InterPro" id="IPR029026">
    <property type="entry name" value="tRNA_m1G_MTases_N"/>
</dbReference>
<dbReference type="InterPro" id="IPR016009">
    <property type="entry name" value="tRNA_MeTrfase_TRMD/TRM10"/>
</dbReference>
<dbReference type="NCBIfam" id="NF000648">
    <property type="entry name" value="PRK00026.1"/>
    <property type="match status" value="1"/>
</dbReference>
<dbReference type="NCBIfam" id="TIGR00088">
    <property type="entry name" value="trmD"/>
    <property type="match status" value="1"/>
</dbReference>
<dbReference type="PANTHER" id="PTHR46417">
    <property type="entry name" value="TRNA (GUANINE-N(1)-)-METHYLTRANSFERASE"/>
    <property type="match status" value="1"/>
</dbReference>
<dbReference type="PANTHER" id="PTHR46417:SF1">
    <property type="entry name" value="TRNA (GUANINE-N(1)-)-METHYLTRANSFERASE"/>
    <property type="match status" value="1"/>
</dbReference>
<dbReference type="Pfam" id="PF01746">
    <property type="entry name" value="tRNA_m1G_MT"/>
    <property type="match status" value="1"/>
</dbReference>
<dbReference type="PIRSF" id="PIRSF000386">
    <property type="entry name" value="tRNA_mtase"/>
    <property type="match status" value="1"/>
</dbReference>
<dbReference type="SUPFAM" id="SSF75217">
    <property type="entry name" value="alpha/beta knot"/>
    <property type="match status" value="1"/>
</dbReference>
<comment type="function">
    <text evidence="1">Specifically methylates guanosine-37 in various tRNAs.</text>
</comment>
<comment type="catalytic activity">
    <reaction evidence="1">
        <text>guanosine(37) in tRNA + S-adenosyl-L-methionine = N(1)-methylguanosine(37) in tRNA + S-adenosyl-L-homocysteine + H(+)</text>
        <dbReference type="Rhea" id="RHEA:36899"/>
        <dbReference type="Rhea" id="RHEA-COMP:10145"/>
        <dbReference type="Rhea" id="RHEA-COMP:10147"/>
        <dbReference type="ChEBI" id="CHEBI:15378"/>
        <dbReference type="ChEBI" id="CHEBI:57856"/>
        <dbReference type="ChEBI" id="CHEBI:59789"/>
        <dbReference type="ChEBI" id="CHEBI:73542"/>
        <dbReference type="ChEBI" id="CHEBI:74269"/>
        <dbReference type="EC" id="2.1.1.228"/>
    </reaction>
</comment>
<comment type="subunit">
    <text evidence="1">Homodimer.</text>
</comment>
<comment type="subcellular location">
    <subcellularLocation>
        <location evidence="1">Cytoplasm</location>
    </subcellularLocation>
</comment>
<comment type="similarity">
    <text evidence="1">Belongs to the RNA methyltransferase TrmD family.</text>
</comment>
<reference key="1">
    <citation type="journal article" date="2004" name="Nucleic Acids Res.">
        <title>Comparative analysis of the Borrelia garinii genome.</title>
        <authorList>
            <person name="Gloeckner G."/>
            <person name="Lehmann R."/>
            <person name="Romualdi A."/>
            <person name="Pradella S."/>
            <person name="Schulte-Spechtel U."/>
            <person name="Schilhabel M."/>
            <person name="Wilske B."/>
            <person name="Suehnel J."/>
            <person name="Platzer M."/>
        </authorList>
    </citation>
    <scope>NUCLEOTIDE SEQUENCE [LARGE SCALE GENOMIC DNA]</scope>
    <source>
        <strain>ATCC BAA-2496 / DSM 23469 / PBi</strain>
    </source>
</reference>
<keyword id="KW-0963">Cytoplasm</keyword>
<keyword id="KW-0489">Methyltransferase</keyword>
<keyword id="KW-0949">S-adenosyl-L-methionine</keyword>
<keyword id="KW-0808">Transferase</keyword>
<keyword id="KW-0819">tRNA processing</keyword>